<name>LGT_THET8</name>
<feature type="chain" id="PRO_0000172703" description="Phosphatidylglycerol--prolipoprotein diacylglyceryl transferase">
    <location>
        <begin position="1"/>
        <end position="279"/>
    </location>
</feature>
<feature type="transmembrane region" description="Helical" evidence="1">
    <location>
        <begin position="4"/>
        <end position="24"/>
    </location>
</feature>
<feature type="transmembrane region" description="Helical" evidence="1">
    <location>
        <begin position="44"/>
        <end position="64"/>
    </location>
</feature>
<feature type="transmembrane region" description="Helical" evidence="1">
    <location>
        <begin position="76"/>
        <end position="96"/>
    </location>
</feature>
<feature type="transmembrane region" description="Helical" evidence="1">
    <location>
        <begin position="104"/>
        <end position="124"/>
    </location>
</feature>
<feature type="transmembrane region" description="Helical" evidence="1">
    <location>
        <begin position="182"/>
        <end position="202"/>
    </location>
</feature>
<feature type="transmembrane region" description="Helical" evidence="1">
    <location>
        <begin position="206"/>
        <end position="226"/>
    </location>
</feature>
<feature type="transmembrane region" description="Helical" evidence="1">
    <location>
        <begin position="245"/>
        <end position="265"/>
    </location>
</feature>
<feature type="binding site" evidence="1">
    <location>
        <position position="126"/>
    </location>
    <ligand>
        <name>a 1,2-diacyl-sn-glycero-3-phospho-(1'-sn-glycerol)</name>
        <dbReference type="ChEBI" id="CHEBI:64716"/>
    </ligand>
</feature>
<protein>
    <recommendedName>
        <fullName evidence="1">Phosphatidylglycerol--prolipoprotein diacylglyceryl transferase</fullName>
        <ecNumber evidence="1">2.5.1.145</ecNumber>
    </recommendedName>
</protein>
<organism>
    <name type="scientific">Thermus thermophilus (strain ATCC 27634 / DSM 579 / HB8)</name>
    <dbReference type="NCBI Taxonomy" id="300852"/>
    <lineage>
        <taxon>Bacteria</taxon>
        <taxon>Thermotogati</taxon>
        <taxon>Deinococcota</taxon>
        <taxon>Deinococci</taxon>
        <taxon>Thermales</taxon>
        <taxon>Thermaceae</taxon>
        <taxon>Thermus</taxon>
    </lineage>
</organism>
<comment type="function">
    <text evidence="1">Catalyzes the transfer of the diacylglyceryl group from phosphatidylglycerol to the sulfhydryl group of the N-terminal cysteine of a prolipoprotein, the first step in the formation of mature lipoproteins.</text>
</comment>
<comment type="catalytic activity">
    <reaction evidence="1">
        <text>L-cysteinyl-[prolipoprotein] + a 1,2-diacyl-sn-glycero-3-phospho-(1'-sn-glycerol) = an S-1,2-diacyl-sn-glyceryl-L-cysteinyl-[prolipoprotein] + sn-glycerol 1-phosphate + H(+)</text>
        <dbReference type="Rhea" id="RHEA:56712"/>
        <dbReference type="Rhea" id="RHEA-COMP:14679"/>
        <dbReference type="Rhea" id="RHEA-COMP:14680"/>
        <dbReference type="ChEBI" id="CHEBI:15378"/>
        <dbReference type="ChEBI" id="CHEBI:29950"/>
        <dbReference type="ChEBI" id="CHEBI:57685"/>
        <dbReference type="ChEBI" id="CHEBI:64716"/>
        <dbReference type="ChEBI" id="CHEBI:140658"/>
        <dbReference type="EC" id="2.5.1.145"/>
    </reaction>
</comment>
<comment type="pathway">
    <text evidence="1">Protein modification; lipoprotein biosynthesis (diacylglyceryl transfer).</text>
</comment>
<comment type="subcellular location">
    <subcellularLocation>
        <location evidence="1">Cell inner membrane</location>
        <topology evidence="1">Multi-pass membrane protein</topology>
    </subcellularLocation>
</comment>
<comment type="similarity">
    <text evidence="1">Belongs to the Lgt family.</text>
</comment>
<evidence type="ECO:0000255" key="1">
    <source>
        <dbReference type="HAMAP-Rule" id="MF_01147"/>
    </source>
</evidence>
<accession>Q5SLA9</accession>
<reference key="1">
    <citation type="submission" date="2004-11" db="EMBL/GenBank/DDBJ databases">
        <title>Complete genome sequence of Thermus thermophilus HB8.</title>
        <authorList>
            <person name="Masui R."/>
            <person name="Kurokawa K."/>
            <person name="Nakagawa N."/>
            <person name="Tokunaga F."/>
            <person name="Koyama Y."/>
            <person name="Shibata T."/>
            <person name="Oshima T."/>
            <person name="Yokoyama S."/>
            <person name="Yasunaga T."/>
            <person name="Kuramitsu S."/>
        </authorList>
    </citation>
    <scope>NUCLEOTIDE SEQUENCE [LARGE SCALE GENOMIC DNA]</scope>
    <source>
        <strain>ATCC 27634 / DSM 579 / HB8</strain>
    </source>
</reference>
<proteinExistence type="inferred from homology"/>
<sequence length="279" mass="31667">MVQIGPLAIRWYGVLLTLAIFLGYELARRRLRAWGWDLEPFERVVFWAVVFGVVGARLGYVLTSPGYFLENPLEALYIWHGGLSFHGAILGGGLTFYYFHRRRGYPLWPYLDAATPGVALGIVAGRIGNLMNGSDTAGRLTTLPIGFTWPEWARGFPGVCPGIDDISEVYRCAELLRGPVHLTQVYGAVVGLILLFLSLYWLRKRPFYGYAFWQFVLWYSVLRSVLEEPFRLNPLWLPVYRNDELGIGLFTATQVVSLPLVLLSLYMLRRLGKGEASRR</sequence>
<keyword id="KW-0997">Cell inner membrane</keyword>
<keyword id="KW-1003">Cell membrane</keyword>
<keyword id="KW-0472">Membrane</keyword>
<keyword id="KW-1185">Reference proteome</keyword>
<keyword id="KW-0808">Transferase</keyword>
<keyword id="KW-0812">Transmembrane</keyword>
<keyword id="KW-1133">Transmembrane helix</keyword>
<gene>
    <name evidence="1" type="primary">lgt</name>
    <name type="ordered locus">TTHA0384</name>
</gene>
<dbReference type="EC" id="2.5.1.145" evidence="1"/>
<dbReference type="EMBL" id="AP008226">
    <property type="protein sequence ID" value="BAD70207.1"/>
    <property type="molecule type" value="Genomic_DNA"/>
</dbReference>
<dbReference type="RefSeq" id="WP_011227898.1">
    <property type="nucleotide sequence ID" value="NC_006461.1"/>
</dbReference>
<dbReference type="RefSeq" id="YP_143650.1">
    <property type="nucleotide sequence ID" value="NC_006461.1"/>
</dbReference>
<dbReference type="SMR" id="Q5SLA9"/>
<dbReference type="EnsemblBacteria" id="BAD70207">
    <property type="protein sequence ID" value="BAD70207"/>
    <property type="gene ID" value="BAD70207"/>
</dbReference>
<dbReference type="GeneID" id="3170027"/>
<dbReference type="KEGG" id="ttj:TTHA0384"/>
<dbReference type="PATRIC" id="fig|300852.9.peg.384"/>
<dbReference type="eggNOG" id="COG0682">
    <property type="taxonomic scope" value="Bacteria"/>
</dbReference>
<dbReference type="HOGENOM" id="CLU_013386_1_1_0"/>
<dbReference type="PhylomeDB" id="Q5SLA9"/>
<dbReference type="UniPathway" id="UPA00664"/>
<dbReference type="Proteomes" id="UP000000532">
    <property type="component" value="Chromosome"/>
</dbReference>
<dbReference type="GO" id="GO:0005886">
    <property type="term" value="C:plasma membrane"/>
    <property type="evidence" value="ECO:0007669"/>
    <property type="project" value="UniProtKB-SubCell"/>
</dbReference>
<dbReference type="GO" id="GO:0008961">
    <property type="term" value="F:phosphatidylglycerol-prolipoprotein diacylglyceryl transferase activity"/>
    <property type="evidence" value="ECO:0007669"/>
    <property type="project" value="UniProtKB-UniRule"/>
</dbReference>
<dbReference type="GO" id="GO:0042158">
    <property type="term" value="P:lipoprotein biosynthetic process"/>
    <property type="evidence" value="ECO:0007669"/>
    <property type="project" value="UniProtKB-UniRule"/>
</dbReference>
<dbReference type="HAMAP" id="MF_01147">
    <property type="entry name" value="Lgt"/>
    <property type="match status" value="1"/>
</dbReference>
<dbReference type="InterPro" id="IPR001640">
    <property type="entry name" value="Lgt"/>
</dbReference>
<dbReference type="NCBIfam" id="TIGR00544">
    <property type="entry name" value="lgt"/>
    <property type="match status" value="1"/>
</dbReference>
<dbReference type="NCBIfam" id="NF000784">
    <property type="entry name" value="PRK00052.4-5"/>
    <property type="match status" value="1"/>
</dbReference>
<dbReference type="PANTHER" id="PTHR30589:SF0">
    <property type="entry name" value="PHOSPHATIDYLGLYCEROL--PROLIPOPROTEIN DIACYLGLYCERYL TRANSFERASE"/>
    <property type="match status" value="1"/>
</dbReference>
<dbReference type="PANTHER" id="PTHR30589">
    <property type="entry name" value="PROLIPOPROTEIN DIACYLGLYCERYL TRANSFERASE"/>
    <property type="match status" value="1"/>
</dbReference>
<dbReference type="Pfam" id="PF01790">
    <property type="entry name" value="LGT"/>
    <property type="match status" value="1"/>
</dbReference>